<proteinExistence type="inferred from homology"/>
<organism>
    <name type="scientific">Yersinia pseudotuberculosis serotype I (strain IP32953)</name>
    <dbReference type="NCBI Taxonomy" id="273123"/>
    <lineage>
        <taxon>Bacteria</taxon>
        <taxon>Pseudomonadati</taxon>
        <taxon>Pseudomonadota</taxon>
        <taxon>Gammaproteobacteria</taxon>
        <taxon>Enterobacterales</taxon>
        <taxon>Yersiniaceae</taxon>
        <taxon>Yersinia</taxon>
    </lineage>
</organism>
<dbReference type="EC" id="2.1.1.61" evidence="1"/>
<dbReference type="EC" id="1.5.-.-" evidence="1"/>
<dbReference type="EMBL" id="BX936398">
    <property type="protein sequence ID" value="CAH21865.1"/>
    <property type="status" value="ALT_INIT"/>
    <property type="molecule type" value="Genomic_DNA"/>
</dbReference>
<dbReference type="RefSeq" id="WP_011192689.1">
    <property type="nucleotide sequence ID" value="NC_006155.1"/>
</dbReference>
<dbReference type="SMR" id="Q668W0"/>
<dbReference type="KEGG" id="ypo:BZ17_4012"/>
<dbReference type="KEGG" id="yps:YPTB2627"/>
<dbReference type="PATRIC" id="fig|273123.14.peg.4211"/>
<dbReference type="Proteomes" id="UP000001011">
    <property type="component" value="Chromosome"/>
</dbReference>
<dbReference type="GO" id="GO:0005737">
    <property type="term" value="C:cytoplasm"/>
    <property type="evidence" value="ECO:0007669"/>
    <property type="project" value="UniProtKB-SubCell"/>
</dbReference>
<dbReference type="GO" id="GO:0050660">
    <property type="term" value="F:flavin adenine dinucleotide binding"/>
    <property type="evidence" value="ECO:0007669"/>
    <property type="project" value="UniProtKB-UniRule"/>
</dbReference>
<dbReference type="GO" id="GO:0016645">
    <property type="term" value="F:oxidoreductase activity, acting on the CH-NH group of donors"/>
    <property type="evidence" value="ECO:0007669"/>
    <property type="project" value="InterPro"/>
</dbReference>
<dbReference type="GO" id="GO:0004808">
    <property type="term" value="F:tRNA (5-methylaminomethyl-2-thiouridylate)(34)-methyltransferase activity"/>
    <property type="evidence" value="ECO:0007669"/>
    <property type="project" value="UniProtKB-EC"/>
</dbReference>
<dbReference type="GO" id="GO:0032259">
    <property type="term" value="P:methylation"/>
    <property type="evidence" value="ECO:0007669"/>
    <property type="project" value="UniProtKB-KW"/>
</dbReference>
<dbReference type="GO" id="GO:0002098">
    <property type="term" value="P:tRNA wobble uridine modification"/>
    <property type="evidence" value="ECO:0007669"/>
    <property type="project" value="TreeGrafter"/>
</dbReference>
<dbReference type="FunFam" id="3.40.50.150:FF:000107">
    <property type="entry name" value="tRNA 5-methylaminomethyl-2-thiouridine biosynthesis bifunctional protein MnmC"/>
    <property type="match status" value="1"/>
</dbReference>
<dbReference type="Gene3D" id="3.30.9.10">
    <property type="entry name" value="D-Amino Acid Oxidase, subunit A, domain 2"/>
    <property type="match status" value="1"/>
</dbReference>
<dbReference type="Gene3D" id="3.50.50.60">
    <property type="entry name" value="FAD/NAD(P)-binding domain"/>
    <property type="match status" value="1"/>
</dbReference>
<dbReference type="Gene3D" id="3.40.50.150">
    <property type="entry name" value="Vaccinia Virus protein VP39"/>
    <property type="match status" value="1"/>
</dbReference>
<dbReference type="HAMAP" id="MF_01102">
    <property type="entry name" value="MnmC"/>
    <property type="match status" value="1"/>
</dbReference>
<dbReference type="InterPro" id="IPR006076">
    <property type="entry name" value="FAD-dep_OxRdtase"/>
</dbReference>
<dbReference type="InterPro" id="IPR036188">
    <property type="entry name" value="FAD/NAD-bd_sf"/>
</dbReference>
<dbReference type="InterPro" id="IPR008471">
    <property type="entry name" value="MnmC-like_methylTransf"/>
</dbReference>
<dbReference type="InterPro" id="IPR029063">
    <property type="entry name" value="SAM-dependent_MTases_sf"/>
</dbReference>
<dbReference type="InterPro" id="IPR023032">
    <property type="entry name" value="tRNA_MAMT_biosynth_bifunc_MnmC"/>
</dbReference>
<dbReference type="InterPro" id="IPR047785">
    <property type="entry name" value="tRNA_MNMC2"/>
</dbReference>
<dbReference type="InterPro" id="IPR017610">
    <property type="entry name" value="tRNA_S-uridine_synth_MnmC_C"/>
</dbReference>
<dbReference type="NCBIfam" id="TIGR03197">
    <property type="entry name" value="MnmC_Cterm"/>
    <property type="match status" value="1"/>
</dbReference>
<dbReference type="NCBIfam" id="NF002481">
    <property type="entry name" value="PRK01747.1-2"/>
    <property type="match status" value="1"/>
</dbReference>
<dbReference type="NCBIfam" id="NF002482">
    <property type="entry name" value="PRK01747.1-3"/>
    <property type="match status" value="1"/>
</dbReference>
<dbReference type="NCBIfam" id="NF002484">
    <property type="entry name" value="PRK01747.1-5"/>
    <property type="match status" value="1"/>
</dbReference>
<dbReference type="NCBIfam" id="NF033855">
    <property type="entry name" value="tRNA_MNMC2"/>
    <property type="match status" value="1"/>
</dbReference>
<dbReference type="PANTHER" id="PTHR13847">
    <property type="entry name" value="SARCOSINE DEHYDROGENASE-RELATED"/>
    <property type="match status" value="1"/>
</dbReference>
<dbReference type="PANTHER" id="PTHR13847:SF283">
    <property type="entry name" value="TRNA 5-METHYLAMINOMETHYL-2-THIOURIDINE BIOSYNTHESIS BIFUNCTIONAL PROTEIN MNMC"/>
    <property type="match status" value="1"/>
</dbReference>
<dbReference type="Pfam" id="PF01266">
    <property type="entry name" value="DAO"/>
    <property type="match status" value="1"/>
</dbReference>
<dbReference type="Pfam" id="PF05430">
    <property type="entry name" value="Methyltransf_30"/>
    <property type="match status" value="1"/>
</dbReference>
<dbReference type="SUPFAM" id="SSF51905">
    <property type="entry name" value="FAD/NAD(P)-binding domain"/>
    <property type="match status" value="1"/>
</dbReference>
<dbReference type="SUPFAM" id="SSF53335">
    <property type="entry name" value="S-adenosyl-L-methionine-dependent methyltransferases"/>
    <property type="match status" value="1"/>
</dbReference>
<name>MNMC_YERPS</name>
<gene>
    <name evidence="1" type="primary">mnmC</name>
    <name type="ordered locus">YPTB2627</name>
</gene>
<keyword id="KW-0963">Cytoplasm</keyword>
<keyword id="KW-0274">FAD</keyword>
<keyword id="KW-0285">Flavoprotein</keyword>
<keyword id="KW-0489">Methyltransferase</keyword>
<keyword id="KW-0511">Multifunctional enzyme</keyword>
<keyword id="KW-0560">Oxidoreductase</keyword>
<keyword id="KW-0949">S-adenosyl-L-methionine</keyword>
<keyword id="KW-0808">Transferase</keyword>
<keyword id="KW-0819">tRNA processing</keyword>
<accession>Q668W0</accession>
<sequence>MNQRPIQTATLSWNEQGTPVSEQFGDIYFSNEDGLEETHHVFLKGNGFPARFASHPQQSCIFAETGFGTGLNFLTLWRDFALFRQQSPNATLRRLHYISFEKYPLHVADLASAHARWPELASFAEQLRAQWPLPLAGCHRILLADGAITLDLWFGDVNTLLPTLDDSLNNQVDAWFLDGFAPAKNPDMWNEQLFNAMARMTRPGGTFSTFTAAGFVRRGLQQAGFNVTKVKGFGQKREMLTGTLPQQIHAPTAPWYHRPAATRCDDIAIIGGGIVSALTALALQRRGAVVTLYCADAQPAQGASGNRQGALYPLLNGKNDALETFFTSAFTFARRQYDQLLEQGIAFDHQWCGVSQLAFDDKSRGKIEKMLHTQWPVEFAEAMSREQLSELAGLDCAHDGIHYPAGGWLCPSDLTHALMMLAQQHGMTCHYQHELQRLKRIDNQWQLTFGQSQAAKHHATVILATGHRLPEWEQTHHLPLSAVRGQVSHIPTTPVLSQLQQVLCYDGYLTPVNPANQHHCIGASYQRGDIATDFRLTEQQENRERLLRCLPQVSWPQQVDVSDNQARCGVRCAIRDHLPMVGAVPDYAATLAQYQDLSRRIQHGGESEVNDIAVAPVWPELFMVGGLGSRGLCSAPLVAEILAAQMFGEPLPLDAKTLAALNPNRFWIKKLLKGRPVQTRSPATQESSR</sequence>
<reference key="1">
    <citation type="journal article" date="2004" name="Proc. Natl. Acad. Sci. U.S.A.">
        <title>Insights into the evolution of Yersinia pestis through whole-genome comparison with Yersinia pseudotuberculosis.</title>
        <authorList>
            <person name="Chain P.S.G."/>
            <person name="Carniel E."/>
            <person name="Larimer F.W."/>
            <person name="Lamerdin J."/>
            <person name="Stoutland P.O."/>
            <person name="Regala W.M."/>
            <person name="Georgescu A.M."/>
            <person name="Vergez L.M."/>
            <person name="Land M.L."/>
            <person name="Motin V.L."/>
            <person name="Brubaker R.R."/>
            <person name="Fowler J."/>
            <person name="Hinnebusch J."/>
            <person name="Marceau M."/>
            <person name="Medigue C."/>
            <person name="Simonet M."/>
            <person name="Chenal-Francisque V."/>
            <person name="Souza B."/>
            <person name="Dacheux D."/>
            <person name="Elliott J.M."/>
            <person name="Derbise A."/>
            <person name="Hauser L.J."/>
            <person name="Garcia E."/>
        </authorList>
    </citation>
    <scope>NUCLEOTIDE SEQUENCE [LARGE SCALE GENOMIC DNA]</scope>
    <source>
        <strain>IP32953</strain>
    </source>
</reference>
<evidence type="ECO:0000255" key="1">
    <source>
        <dbReference type="HAMAP-Rule" id="MF_01102"/>
    </source>
</evidence>
<evidence type="ECO:0000305" key="2"/>
<feature type="chain" id="PRO_0000095034" description="tRNA 5-methylaminomethyl-2-thiouridine biosynthesis bifunctional protein MnmC">
    <location>
        <begin position="1"/>
        <end position="689"/>
    </location>
</feature>
<feature type="region of interest" description="tRNA (mnm(5)s(2)U34)-methyltransferase">
    <location>
        <begin position="1"/>
        <end position="245"/>
    </location>
</feature>
<feature type="region of interest" description="FAD-dependent cmnm(5)s(2)U34 oxidoreductase">
    <location>
        <begin position="270"/>
        <end position="689"/>
    </location>
</feature>
<protein>
    <recommendedName>
        <fullName evidence="1">tRNA 5-methylaminomethyl-2-thiouridine biosynthesis bifunctional protein MnmC</fullName>
        <shortName evidence="1">tRNA mnm(5)s(2)U biosynthesis bifunctional protein</shortName>
    </recommendedName>
    <domain>
        <recommendedName>
            <fullName evidence="1">tRNA (mnm(5)s(2)U34)-methyltransferase</fullName>
            <ecNumber evidence="1">2.1.1.61</ecNumber>
        </recommendedName>
    </domain>
    <domain>
        <recommendedName>
            <fullName evidence="1">FAD-dependent cmnm(5)s(2)U34 oxidoreductase</fullName>
            <ecNumber evidence="1">1.5.-.-</ecNumber>
        </recommendedName>
    </domain>
</protein>
<comment type="function">
    <text evidence="1">Catalyzes the last two steps in the biosynthesis of 5-methylaminomethyl-2-thiouridine (mnm(5)s(2)U) at the wobble position (U34) in tRNA. Catalyzes the FAD-dependent demodification of cmnm(5)s(2)U34 to nm(5)s(2)U34, followed by the transfer of a methyl group from S-adenosyl-L-methionine to nm(5)s(2)U34, to form mnm(5)s(2)U34.</text>
</comment>
<comment type="catalytic activity">
    <reaction evidence="1">
        <text>5-aminomethyl-2-thiouridine(34) in tRNA + S-adenosyl-L-methionine = 5-methylaminomethyl-2-thiouridine(34) in tRNA + S-adenosyl-L-homocysteine + H(+)</text>
        <dbReference type="Rhea" id="RHEA:19569"/>
        <dbReference type="Rhea" id="RHEA-COMP:10195"/>
        <dbReference type="Rhea" id="RHEA-COMP:10197"/>
        <dbReference type="ChEBI" id="CHEBI:15378"/>
        <dbReference type="ChEBI" id="CHEBI:57856"/>
        <dbReference type="ChEBI" id="CHEBI:59789"/>
        <dbReference type="ChEBI" id="CHEBI:74454"/>
        <dbReference type="ChEBI" id="CHEBI:74455"/>
        <dbReference type="EC" id="2.1.1.61"/>
    </reaction>
</comment>
<comment type="cofactor">
    <cofactor evidence="1">
        <name>FAD</name>
        <dbReference type="ChEBI" id="CHEBI:57692"/>
    </cofactor>
</comment>
<comment type="subcellular location">
    <subcellularLocation>
        <location evidence="1">Cytoplasm</location>
    </subcellularLocation>
</comment>
<comment type="similarity">
    <text evidence="1">In the N-terminal section; belongs to the methyltransferase superfamily. tRNA (mnm(5)s(2)U34)-methyltransferase family.</text>
</comment>
<comment type="similarity">
    <text evidence="1">In the C-terminal section; belongs to the DAO family.</text>
</comment>
<comment type="sequence caution" evidence="2">
    <conflict type="erroneous initiation">
        <sequence resource="EMBL-CDS" id="CAH21865"/>
    </conflict>
</comment>